<evidence type="ECO:0000255" key="1">
    <source>
        <dbReference type="HAMAP-Rule" id="MF_00176"/>
    </source>
</evidence>
<comment type="function">
    <text evidence="1">Catalyzes the attachment of serine to tRNA(Ser). Is also able to aminoacylate tRNA(Sec) with serine, to form the misacylated tRNA L-seryl-tRNA(Sec), which will be further converted into selenocysteinyl-tRNA(Sec).</text>
</comment>
<comment type="catalytic activity">
    <reaction evidence="1">
        <text>tRNA(Ser) + L-serine + ATP = L-seryl-tRNA(Ser) + AMP + diphosphate + H(+)</text>
        <dbReference type="Rhea" id="RHEA:12292"/>
        <dbReference type="Rhea" id="RHEA-COMP:9669"/>
        <dbReference type="Rhea" id="RHEA-COMP:9703"/>
        <dbReference type="ChEBI" id="CHEBI:15378"/>
        <dbReference type="ChEBI" id="CHEBI:30616"/>
        <dbReference type="ChEBI" id="CHEBI:33019"/>
        <dbReference type="ChEBI" id="CHEBI:33384"/>
        <dbReference type="ChEBI" id="CHEBI:78442"/>
        <dbReference type="ChEBI" id="CHEBI:78533"/>
        <dbReference type="ChEBI" id="CHEBI:456215"/>
        <dbReference type="EC" id="6.1.1.11"/>
    </reaction>
</comment>
<comment type="catalytic activity">
    <reaction evidence="1">
        <text>tRNA(Sec) + L-serine + ATP = L-seryl-tRNA(Sec) + AMP + diphosphate + H(+)</text>
        <dbReference type="Rhea" id="RHEA:42580"/>
        <dbReference type="Rhea" id="RHEA-COMP:9742"/>
        <dbReference type="Rhea" id="RHEA-COMP:10128"/>
        <dbReference type="ChEBI" id="CHEBI:15378"/>
        <dbReference type="ChEBI" id="CHEBI:30616"/>
        <dbReference type="ChEBI" id="CHEBI:33019"/>
        <dbReference type="ChEBI" id="CHEBI:33384"/>
        <dbReference type="ChEBI" id="CHEBI:78442"/>
        <dbReference type="ChEBI" id="CHEBI:78533"/>
        <dbReference type="ChEBI" id="CHEBI:456215"/>
        <dbReference type="EC" id="6.1.1.11"/>
    </reaction>
</comment>
<comment type="pathway">
    <text evidence="1">Aminoacyl-tRNA biosynthesis; selenocysteinyl-tRNA(Sec) biosynthesis; L-seryl-tRNA(Sec) from L-serine and tRNA(Sec): step 1/1.</text>
</comment>
<comment type="subunit">
    <text evidence="1">Homodimer. The tRNA molecule binds across the dimer.</text>
</comment>
<comment type="subcellular location">
    <subcellularLocation>
        <location evidence="1">Cytoplasm</location>
    </subcellularLocation>
</comment>
<comment type="domain">
    <text evidence="1">Consists of two distinct domains, a catalytic core and a N-terminal extension that is involved in tRNA binding.</text>
</comment>
<comment type="similarity">
    <text evidence="1">Belongs to the class-II aminoacyl-tRNA synthetase family. Type-1 seryl-tRNA synthetase subfamily.</text>
</comment>
<organism>
    <name type="scientific">Nitrosomonas europaea (strain ATCC 19718 / CIP 103999 / KCTC 2705 / NBRC 14298)</name>
    <dbReference type="NCBI Taxonomy" id="228410"/>
    <lineage>
        <taxon>Bacteria</taxon>
        <taxon>Pseudomonadati</taxon>
        <taxon>Pseudomonadota</taxon>
        <taxon>Betaproteobacteria</taxon>
        <taxon>Nitrosomonadales</taxon>
        <taxon>Nitrosomonadaceae</taxon>
        <taxon>Nitrosomonas</taxon>
    </lineage>
</organism>
<keyword id="KW-0030">Aminoacyl-tRNA synthetase</keyword>
<keyword id="KW-0067">ATP-binding</keyword>
<keyword id="KW-0963">Cytoplasm</keyword>
<keyword id="KW-0436">Ligase</keyword>
<keyword id="KW-0547">Nucleotide-binding</keyword>
<keyword id="KW-0648">Protein biosynthesis</keyword>
<keyword id="KW-1185">Reference proteome</keyword>
<protein>
    <recommendedName>
        <fullName evidence="1">Serine--tRNA ligase</fullName>
        <ecNumber evidence="1">6.1.1.11</ecNumber>
    </recommendedName>
    <alternativeName>
        <fullName evidence="1">Seryl-tRNA synthetase</fullName>
        <shortName evidence="1">SerRS</shortName>
    </alternativeName>
    <alternativeName>
        <fullName evidence="1">Seryl-tRNA(Ser/Sec) synthetase</fullName>
    </alternativeName>
</protein>
<dbReference type="EC" id="6.1.1.11" evidence="1"/>
<dbReference type="EMBL" id="AL954747">
    <property type="protein sequence ID" value="CAD84091.1"/>
    <property type="molecule type" value="Genomic_DNA"/>
</dbReference>
<dbReference type="RefSeq" id="WP_011110825.1">
    <property type="nucleotide sequence ID" value="NC_004757.1"/>
</dbReference>
<dbReference type="SMR" id="Q820S5"/>
<dbReference type="STRING" id="228410.NE0180"/>
<dbReference type="GeneID" id="87103388"/>
<dbReference type="KEGG" id="neu:NE0180"/>
<dbReference type="eggNOG" id="COG0172">
    <property type="taxonomic scope" value="Bacteria"/>
</dbReference>
<dbReference type="HOGENOM" id="CLU_023797_1_1_4"/>
<dbReference type="OrthoDB" id="9804647at2"/>
<dbReference type="PhylomeDB" id="Q820S5"/>
<dbReference type="UniPathway" id="UPA00906">
    <property type="reaction ID" value="UER00895"/>
</dbReference>
<dbReference type="Proteomes" id="UP000001416">
    <property type="component" value="Chromosome"/>
</dbReference>
<dbReference type="GO" id="GO:0005737">
    <property type="term" value="C:cytoplasm"/>
    <property type="evidence" value="ECO:0007669"/>
    <property type="project" value="UniProtKB-SubCell"/>
</dbReference>
<dbReference type="GO" id="GO:0005524">
    <property type="term" value="F:ATP binding"/>
    <property type="evidence" value="ECO:0007669"/>
    <property type="project" value="UniProtKB-UniRule"/>
</dbReference>
<dbReference type="GO" id="GO:0004828">
    <property type="term" value="F:serine-tRNA ligase activity"/>
    <property type="evidence" value="ECO:0007669"/>
    <property type="project" value="UniProtKB-UniRule"/>
</dbReference>
<dbReference type="GO" id="GO:0016260">
    <property type="term" value="P:selenocysteine biosynthetic process"/>
    <property type="evidence" value="ECO:0007669"/>
    <property type="project" value="UniProtKB-UniRule"/>
</dbReference>
<dbReference type="GO" id="GO:0006434">
    <property type="term" value="P:seryl-tRNA aminoacylation"/>
    <property type="evidence" value="ECO:0007669"/>
    <property type="project" value="UniProtKB-UniRule"/>
</dbReference>
<dbReference type="CDD" id="cd00770">
    <property type="entry name" value="SerRS_core"/>
    <property type="match status" value="1"/>
</dbReference>
<dbReference type="Gene3D" id="3.30.930.10">
    <property type="entry name" value="Bira Bifunctional Protein, Domain 2"/>
    <property type="match status" value="1"/>
</dbReference>
<dbReference type="Gene3D" id="1.10.287.40">
    <property type="entry name" value="Serine-tRNA synthetase, tRNA binding domain"/>
    <property type="match status" value="1"/>
</dbReference>
<dbReference type="HAMAP" id="MF_00176">
    <property type="entry name" value="Ser_tRNA_synth_type1"/>
    <property type="match status" value="1"/>
</dbReference>
<dbReference type="InterPro" id="IPR002314">
    <property type="entry name" value="aa-tRNA-synt_IIb"/>
</dbReference>
<dbReference type="InterPro" id="IPR006195">
    <property type="entry name" value="aa-tRNA-synth_II"/>
</dbReference>
<dbReference type="InterPro" id="IPR045864">
    <property type="entry name" value="aa-tRNA-synth_II/BPL/LPL"/>
</dbReference>
<dbReference type="InterPro" id="IPR002317">
    <property type="entry name" value="Ser-tRNA-ligase_type_1"/>
</dbReference>
<dbReference type="InterPro" id="IPR015866">
    <property type="entry name" value="Ser-tRNA-synth_1_N"/>
</dbReference>
<dbReference type="InterPro" id="IPR042103">
    <property type="entry name" value="SerRS_1_N_sf"/>
</dbReference>
<dbReference type="InterPro" id="IPR033729">
    <property type="entry name" value="SerRS_core"/>
</dbReference>
<dbReference type="InterPro" id="IPR010978">
    <property type="entry name" value="tRNA-bd_arm"/>
</dbReference>
<dbReference type="NCBIfam" id="TIGR00414">
    <property type="entry name" value="serS"/>
    <property type="match status" value="1"/>
</dbReference>
<dbReference type="PANTHER" id="PTHR43697:SF1">
    <property type="entry name" value="SERINE--TRNA LIGASE"/>
    <property type="match status" value="1"/>
</dbReference>
<dbReference type="PANTHER" id="PTHR43697">
    <property type="entry name" value="SERYL-TRNA SYNTHETASE"/>
    <property type="match status" value="1"/>
</dbReference>
<dbReference type="Pfam" id="PF02403">
    <property type="entry name" value="Seryl_tRNA_N"/>
    <property type="match status" value="1"/>
</dbReference>
<dbReference type="Pfam" id="PF00587">
    <property type="entry name" value="tRNA-synt_2b"/>
    <property type="match status" value="1"/>
</dbReference>
<dbReference type="PIRSF" id="PIRSF001529">
    <property type="entry name" value="Ser-tRNA-synth_IIa"/>
    <property type="match status" value="1"/>
</dbReference>
<dbReference type="PRINTS" id="PR00981">
    <property type="entry name" value="TRNASYNTHSER"/>
</dbReference>
<dbReference type="SUPFAM" id="SSF55681">
    <property type="entry name" value="Class II aaRS and biotin synthetases"/>
    <property type="match status" value="1"/>
</dbReference>
<dbReference type="SUPFAM" id="SSF46589">
    <property type="entry name" value="tRNA-binding arm"/>
    <property type="match status" value="1"/>
</dbReference>
<dbReference type="PROSITE" id="PS50862">
    <property type="entry name" value="AA_TRNA_LIGASE_II"/>
    <property type="match status" value="1"/>
</dbReference>
<name>SYS_NITEU</name>
<proteinExistence type="inferred from homology"/>
<gene>
    <name evidence="1" type="primary">serS</name>
    <name type="ordered locus">NE0180</name>
</gene>
<reference key="1">
    <citation type="journal article" date="2003" name="J. Bacteriol.">
        <title>Complete genome sequence of the ammonia-oxidizing bacterium and obligate chemolithoautotroph Nitrosomonas europaea.</title>
        <authorList>
            <person name="Chain P."/>
            <person name="Lamerdin J.E."/>
            <person name="Larimer F.W."/>
            <person name="Regala W."/>
            <person name="Lao V."/>
            <person name="Land M.L."/>
            <person name="Hauser L."/>
            <person name="Hooper A.B."/>
            <person name="Klotz M.G."/>
            <person name="Norton J."/>
            <person name="Sayavedra-Soto L.A."/>
            <person name="Arciero D.M."/>
            <person name="Hommes N.G."/>
            <person name="Whittaker M.M."/>
            <person name="Arp D.J."/>
        </authorList>
    </citation>
    <scope>NUCLEOTIDE SEQUENCE [LARGE SCALE GENOMIC DNA]</scope>
    <source>
        <strain>ATCC 19718 / CIP 103999 / KCTC 2705 / NBRC 14298</strain>
    </source>
</reference>
<accession>Q820S5</accession>
<sequence length="437" mass="48933">MLDIQQLRSNLQNIITRLAQRGYDFPVADFESLESQRKSVQTLTQTLQAKRNSASKQIGIARQRGEDVSLIMAEVANMGDELKQAENQLEAVQTRLQQLLLEIPNLPHDSVPAGKDENDNLEMRRWGTPKTFDFPVQDHASIGEHLKLIDFETAAKLSGARFSLLKGGLARLHRALAQFMLDTHTQENGYNEIYVPYLVNADCLRGTGQLPKFEQDLFAVRSGAQEEADNPDKTGPAGLHLIPTAEVPLTNIVRNTIVPLENLPLQFVAHTPCFRSEAGSYGRDTRGLIRQHQFDKVELVQITHPEKSHEALESLVGHAEKILQKLELPYRVMLLCTGDMGFSAAKTYDIEVWLPAQQAYREISSCSNCEAFQARRMQARFRKGQEKPELLHTLNGSGLAVGRTLVAILENYQNEDGSITIPEILRAYMGGIERIGL</sequence>
<feature type="chain" id="PRO_0000122091" description="Serine--tRNA ligase">
    <location>
        <begin position="1"/>
        <end position="437"/>
    </location>
</feature>
<feature type="binding site" evidence="1">
    <location>
        <begin position="244"/>
        <end position="246"/>
    </location>
    <ligand>
        <name>L-serine</name>
        <dbReference type="ChEBI" id="CHEBI:33384"/>
    </ligand>
</feature>
<feature type="binding site" evidence="1">
    <location>
        <begin position="275"/>
        <end position="277"/>
    </location>
    <ligand>
        <name>ATP</name>
        <dbReference type="ChEBI" id="CHEBI:30616"/>
    </ligand>
</feature>
<feature type="binding site" evidence="1">
    <location>
        <position position="298"/>
    </location>
    <ligand>
        <name>L-serine</name>
        <dbReference type="ChEBI" id="CHEBI:33384"/>
    </ligand>
</feature>
<feature type="binding site" evidence="1">
    <location>
        <begin position="362"/>
        <end position="365"/>
    </location>
    <ligand>
        <name>ATP</name>
        <dbReference type="ChEBI" id="CHEBI:30616"/>
    </ligand>
</feature>
<feature type="binding site" evidence="1">
    <location>
        <position position="397"/>
    </location>
    <ligand>
        <name>L-serine</name>
        <dbReference type="ChEBI" id="CHEBI:33384"/>
    </ligand>
</feature>